<dbReference type="EMBL" id="AY651747">
    <property type="protein sequence ID" value="AAT73578.2"/>
    <property type="molecule type" value="Genomic_RNA"/>
</dbReference>
<dbReference type="SMR" id="Q6DNK5"/>
<dbReference type="GO" id="GO:0042025">
    <property type="term" value="C:host cell nucleus"/>
    <property type="evidence" value="ECO:0007669"/>
    <property type="project" value="UniProtKB-SubCell"/>
</dbReference>
<dbReference type="GO" id="GO:0044423">
    <property type="term" value="C:virion component"/>
    <property type="evidence" value="ECO:0007669"/>
    <property type="project" value="UniProtKB-UniRule"/>
</dbReference>
<dbReference type="GO" id="GO:0003723">
    <property type="term" value="F:RNA binding"/>
    <property type="evidence" value="ECO:0007669"/>
    <property type="project" value="UniProtKB-UniRule"/>
</dbReference>
<dbReference type="GO" id="GO:0003968">
    <property type="term" value="F:RNA-directed RNA polymerase activity"/>
    <property type="evidence" value="ECO:0007669"/>
    <property type="project" value="UniProtKB-UniRule"/>
</dbReference>
<dbReference type="GO" id="GO:0006370">
    <property type="term" value="P:7-methylguanosine mRNA capping"/>
    <property type="evidence" value="ECO:0007669"/>
    <property type="project" value="UniProtKB-UniRule"/>
</dbReference>
<dbReference type="GO" id="GO:0075526">
    <property type="term" value="P:cap snatching"/>
    <property type="evidence" value="ECO:0007669"/>
    <property type="project" value="UniProtKB-UniRule"/>
</dbReference>
<dbReference type="GO" id="GO:0006351">
    <property type="term" value="P:DNA-templated transcription"/>
    <property type="evidence" value="ECO:0007669"/>
    <property type="project" value="UniProtKB-UniRule"/>
</dbReference>
<dbReference type="GO" id="GO:0039657">
    <property type="term" value="P:symbiont-mediated suppression of host gene expression"/>
    <property type="evidence" value="ECO:0007669"/>
    <property type="project" value="UniProtKB-KW"/>
</dbReference>
<dbReference type="GO" id="GO:0039523">
    <property type="term" value="P:symbiont-mediated suppression of host mRNA transcription via inhibition of RNA polymerase II activity"/>
    <property type="evidence" value="ECO:0007669"/>
    <property type="project" value="UniProtKB-UniRule"/>
</dbReference>
<dbReference type="GO" id="GO:0039694">
    <property type="term" value="P:viral RNA genome replication"/>
    <property type="evidence" value="ECO:0007669"/>
    <property type="project" value="InterPro"/>
</dbReference>
<dbReference type="FunFam" id="3.30.30.90:FF:000001">
    <property type="entry name" value="Polymerase basic protein 2"/>
    <property type="match status" value="1"/>
</dbReference>
<dbReference type="Gene3D" id="3.30.30.90">
    <property type="entry name" value="Polymerase Basic Protein 2, C-terminal domain"/>
    <property type="match status" value="1"/>
</dbReference>
<dbReference type="HAMAP" id="MF_04062">
    <property type="entry name" value="INV_PB2"/>
    <property type="match status" value="1"/>
</dbReference>
<dbReference type="InterPro" id="IPR049110">
    <property type="entry name" value="Flu_PB2_2nd"/>
</dbReference>
<dbReference type="InterPro" id="IPR049114">
    <property type="entry name" value="Flu_PB2_6th"/>
</dbReference>
<dbReference type="InterPro" id="IPR049115">
    <property type="entry name" value="Flu_PB2_C"/>
</dbReference>
<dbReference type="InterPro" id="IPR048298">
    <property type="entry name" value="Flu_PB2_CAP-bd"/>
</dbReference>
<dbReference type="InterPro" id="IPR049111">
    <property type="entry name" value="Flu_PB2_middle"/>
</dbReference>
<dbReference type="InterPro" id="IPR049106">
    <property type="entry name" value="Flu_PB2_N"/>
</dbReference>
<dbReference type="InterPro" id="IPR001591">
    <property type="entry name" value="INV_PB2"/>
</dbReference>
<dbReference type="InterPro" id="IPR049113">
    <property type="entry name" value="PB2_helical"/>
</dbReference>
<dbReference type="InterPro" id="IPR037258">
    <property type="entry name" value="PDB2_C"/>
</dbReference>
<dbReference type="Pfam" id="PF20947">
    <property type="entry name" value="Flu_PB2_1st"/>
    <property type="match status" value="1"/>
</dbReference>
<dbReference type="Pfam" id="PF20948">
    <property type="entry name" value="Flu_PB2_2nd"/>
    <property type="match status" value="1"/>
</dbReference>
<dbReference type="Pfam" id="PF20949">
    <property type="entry name" value="Flu_PB2_3rd"/>
    <property type="match status" value="1"/>
</dbReference>
<dbReference type="Pfam" id="PF20950">
    <property type="entry name" value="Flu_PB2_4th"/>
    <property type="match status" value="1"/>
</dbReference>
<dbReference type="Pfam" id="PF00604">
    <property type="entry name" value="Flu_PB2_5th"/>
    <property type="match status" value="1"/>
</dbReference>
<dbReference type="Pfam" id="PF20951">
    <property type="entry name" value="Flu_PB2_6th"/>
    <property type="match status" value="1"/>
</dbReference>
<dbReference type="Pfam" id="PF20952">
    <property type="entry name" value="Flu_PB2_7th"/>
    <property type="match status" value="1"/>
</dbReference>
<dbReference type="SUPFAM" id="SSF160453">
    <property type="entry name" value="PB2 C-terminal domain-like"/>
    <property type="match status" value="1"/>
</dbReference>
<evidence type="ECO:0000255" key="1">
    <source>
        <dbReference type="HAMAP-Rule" id="MF_04062"/>
    </source>
</evidence>
<keyword id="KW-1157">Cap snatching</keyword>
<keyword id="KW-1262">Eukaryotic host gene expression shutoff by virus</keyword>
<keyword id="KW-1191">Eukaryotic host transcription shutoff by virus</keyword>
<keyword id="KW-1190">Host gene expression shutoff by virus</keyword>
<keyword id="KW-1048">Host nucleus</keyword>
<keyword id="KW-0945">Host-virus interaction</keyword>
<keyword id="KW-1104">Inhibition of host RNA polymerase II by virus</keyword>
<keyword id="KW-0506">mRNA capping</keyword>
<keyword id="KW-0507">mRNA processing</keyword>
<keyword id="KW-1195">Viral transcription</keyword>
<keyword id="KW-0946">Virion</keyword>
<name>PB2_I02A7</name>
<feature type="chain" id="PRO_0000311154" description="Polymerase basic protein 2">
    <location>
        <begin position="1"/>
        <end position="759"/>
    </location>
</feature>
<feature type="short sequence motif" description="Nuclear localization signal" evidence="1">
    <location>
        <begin position="736"/>
        <end position="739"/>
    </location>
</feature>
<feature type="site" description="Avian adaptation" evidence="1">
    <location>
        <position position="627"/>
    </location>
</feature>
<protein>
    <recommendedName>
        <fullName evidence="1">Polymerase basic protein 2</fullName>
    </recommendedName>
    <alternativeName>
        <fullName evidence="1">RNA-directed RNA polymerase subunit P3</fullName>
    </alternativeName>
</protein>
<accession>Q6DNK5</accession>
<organismHost>
    <name type="scientific">Aves</name>
    <dbReference type="NCBI Taxonomy" id="8782"/>
</organismHost>
<organismHost>
    <name type="scientific">Felis catus</name>
    <name type="common">Cat</name>
    <name type="synonym">Felis silvestris catus</name>
    <dbReference type="NCBI Taxonomy" id="9685"/>
</organismHost>
<organismHost>
    <name type="scientific">Homo sapiens</name>
    <name type="common">Human</name>
    <dbReference type="NCBI Taxonomy" id="9606"/>
</organismHost>
<organismHost>
    <name type="scientific">Panthera pardus</name>
    <name type="common">Leopard</name>
    <name type="synonym">Felis pardus</name>
    <dbReference type="NCBI Taxonomy" id="9691"/>
</organismHost>
<organismHost>
    <name type="scientific">Panthera tigris</name>
    <name type="common">Tiger</name>
    <dbReference type="NCBI Taxonomy" id="9694"/>
</organismHost>
<organismHost>
    <name type="scientific">Sus scrofa</name>
    <name type="common">Pig</name>
    <dbReference type="NCBI Taxonomy" id="9823"/>
</organismHost>
<organism>
    <name type="scientific">Influenza A virus (strain A/Teal/China/2978.1/2002 H5N1 genotype W)</name>
    <dbReference type="NCBI Taxonomy" id="284215"/>
    <lineage>
        <taxon>Viruses</taxon>
        <taxon>Riboviria</taxon>
        <taxon>Orthornavirae</taxon>
        <taxon>Negarnaviricota</taxon>
        <taxon>Polyploviricotina</taxon>
        <taxon>Insthoviricetes</taxon>
        <taxon>Articulavirales</taxon>
        <taxon>Orthomyxoviridae</taxon>
        <taxon>Alphainfluenzavirus</taxon>
        <taxon>Alphainfluenzavirus influenzae</taxon>
        <taxon>Influenza A virus</taxon>
    </lineage>
</organism>
<proteinExistence type="inferred from homology"/>
<gene>
    <name evidence="1" type="primary">PB2</name>
</gene>
<reference key="1">
    <citation type="journal article" date="2004" name="Nature">
        <title>Genesis of a highly pathogenic and potentially pandemic H5N1 influenza virus in eastern Asia.</title>
        <authorList>
            <person name="Li K.S."/>
            <person name="Guan Y."/>
            <person name="Wang J."/>
            <person name="Smith G.J.D."/>
            <person name="Xu K.M."/>
            <person name="Duan L."/>
            <person name="Rahardjo A.P."/>
            <person name="Puthavathana P."/>
            <person name="Buranathai C."/>
            <person name="Nguyen T.D."/>
            <person name="Estoepangestie A.T.S."/>
            <person name="Chaisingh A."/>
            <person name="Auewarakul P."/>
            <person name="Long H.T."/>
            <person name="Hanh N.T.H."/>
            <person name="Webby R.J."/>
            <person name="Poon L.L.M."/>
            <person name="Chen H."/>
            <person name="Shortridge K.F."/>
            <person name="Yuen K.Y."/>
            <person name="Webster R.G."/>
            <person name="Peiris J.S.M."/>
        </authorList>
    </citation>
    <scope>NUCLEOTIDE SEQUENCE [GENOMIC RNA]</scope>
</reference>
<reference key="2">
    <citation type="submission" date="2008-03" db="EMBL/GenBank/DDBJ databases">
        <authorList>
            <person name="Li K.S."/>
            <person name="Guan Y."/>
            <person name="Wang J."/>
            <person name="Smith G.J.D."/>
            <person name="Xu K.M."/>
            <person name="Duan L."/>
            <person name="Rahardjo A.P."/>
            <person name="Puthavathana P."/>
            <person name="Buranathai C."/>
            <person name="Nguyen T.D."/>
            <person name="Estoepangestie A.T.S."/>
            <person name="Chaisingh A."/>
            <person name="Auewarakul P."/>
            <person name="Long H.T."/>
            <person name="Hanh N.T.H."/>
            <person name="Lim W."/>
            <person name="Webby R.J."/>
            <person name="Poon L.L.M."/>
            <person name="Chen H."/>
            <person name="Shortridge K.F."/>
            <person name="Yuen K.Y."/>
            <person name="Webster R.G."/>
            <person name="Peiris J.S.M."/>
        </authorList>
    </citation>
    <scope>SEQUENCE REVISION</scope>
</reference>
<comment type="function">
    <text evidence="1">Plays an essential role in transcription initiation and cap-stealing mechanism, in which cellular capped pre-mRNAs are used to generate primers for viral transcription. Recognizes and binds the 7-methylguanosine-containing cap of the target pre-RNA which is subsequently cleaved after 10-13 nucleotides by the viral protein PA. Plays a role in the initiation of the viral genome replication and modulates the activity of the ribonucleoprotein (RNP) complex.</text>
</comment>
<comment type="subunit">
    <text evidence="1">Influenza RNA polymerase is composed of three subunits: PB1, PB2 and PA. Interacts (via N-terminus) with PB1 (via C-terminus). Interacts with nucleoprotein NP (via N-terminus).</text>
</comment>
<comment type="subcellular location">
    <subcellularLocation>
        <location evidence="1">Virion</location>
    </subcellularLocation>
    <subcellularLocation>
        <location evidence="1">Host nucleus</location>
    </subcellularLocation>
</comment>
<comment type="similarity">
    <text evidence="1">Belongs to the influenza viruses PB2 family.</text>
</comment>
<sequence>MERIKELRDLMSQSRTREILTKTTVDHMAIIKKYTSGRQEKNPALRMKWMMAMKYPITADKRIMEMIPERNEQGQMLWSKANDAGSDRVMVSPLAVTWWNRNGPTTSTVHYPKVYKTYFEKVERLKHGTFGPVHFRNQVKIRRRVDINPGHADLSAKEAQDVIMEVVFPNEVGARILTSESQLTITKEKKEELQDCKIAPLMVAYMLERELVRKTRFLPVAGGTSSVYIEVLHLTQGTCWEQMYTPGGEVRNDDVDQSLIIAARNIVRRATVSADPLASLLEMCHSTQIGGIRMVDILRQNPTEEQAVDICKAAMGLRISSSFSFGGFTFKRTSGSSVKKEEEVLTGNLQTLKIRVHEGYEEFTMVGRRATAILRKATRRLIQLIVSGRDEQSIAEAIIVAMVFSQEDCMIKAVRGDLNFVNRANQRLNPMHQLLRHFQKDAKLLFQNWGIEPIDNVMGMIGILPDMTPSTEMSLRGVRVSKMGVDEYSSTERVVVSIDRFLRVRDQRGNVLLSPEEVSETQGTEKLTITYSSSMMWEINGPESVLVNTYQWIIRNWETVKIQWSQDPTMLYNKMEFEPFQSLVPKAARGQYSGFVRTLFQQMRDVLGTFDTVQIIKLLPFAAAPPEQSRMQFSSLTVNVRGSGMRILVRGNSPVFNYNKATKRLTVLGKDAGALTEDPDEGTAGVESAVLRGFLILGKEDKRYGPALSINELSNLAKGEKANVLIGQGDVVLVMKRKRDSSILTDSQTATKRIRMAIN</sequence>